<name>TRUD_SALTY</name>
<sequence length="349" mass="39333">MTEFDNLTWLHGKPQGSGLLKANPEDFVVVEDLGFTPDGEGEHILLRILKNGCNTRFVADALAKFLKIHAREVSFAGQKDKHAVTEQWLCARVPGKEMPDFSAFQLEGCKVLEYARHKRKLRLGALKGNAFTLVLREISDRRDVETRLQAIRDGGVPNYFGAQRFGIGGSNLQGALRWAQSNAPVRDRNKRSFWLSAARSALFNQIVHQRLKKPDFNQVVDGDALQLAGRGSWFVATSEELPELQRRVDEKELMITASLPGSGEWGTQRAALAFEQDAIAQETVLQSLLLREKVEASRRAMLLYPQQLSWNWWDDVTVELRFWLPAGSFATSVVRELINTMGDYAHIAE</sequence>
<proteinExistence type="inferred from homology"/>
<reference key="1">
    <citation type="journal article" date="2001" name="Nature">
        <title>Complete genome sequence of Salmonella enterica serovar Typhimurium LT2.</title>
        <authorList>
            <person name="McClelland M."/>
            <person name="Sanderson K.E."/>
            <person name="Spieth J."/>
            <person name="Clifton S.W."/>
            <person name="Latreille P."/>
            <person name="Courtney L."/>
            <person name="Porwollik S."/>
            <person name="Ali J."/>
            <person name="Dante M."/>
            <person name="Du F."/>
            <person name="Hou S."/>
            <person name="Layman D."/>
            <person name="Leonard S."/>
            <person name="Nguyen C."/>
            <person name="Scott K."/>
            <person name="Holmes A."/>
            <person name="Grewal N."/>
            <person name="Mulvaney E."/>
            <person name="Ryan E."/>
            <person name="Sun H."/>
            <person name="Florea L."/>
            <person name="Miller W."/>
            <person name="Stoneking T."/>
            <person name="Nhan M."/>
            <person name="Waterston R."/>
            <person name="Wilson R.K."/>
        </authorList>
    </citation>
    <scope>NUCLEOTIDE SEQUENCE [LARGE SCALE GENOMIC DNA]</scope>
    <source>
        <strain>LT2 / SGSC1412 / ATCC 700720</strain>
    </source>
</reference>
<feature type="chain" id="PRO_0000152520" description="tRNA pseudouridine synthase D">
    <location>
        <begin position="1"/>
        <end position="349"/>
    </location>
</feature>
<feature type="domain" description="TRUD" evidence="1">
    <location>
        <begin position="155"/>
        <end position="303"/>
    </location>
</feature>
<feature type="active site" description="Nucleophile" evidence="1">
    <location>
        <position position="80"/>
    </location>
</feature>
<feature type="binding site" evidence="1">
    <location>
        <position position="27"/>
    </location>
    <ligand>
        <name>substrate</name>
    </ligand>
</feature>
<feature type="binding site" evidence="1">
    <location>
        <position position="129"/>
    </location>
    <ligand>
        <name>substrate</name>
    </ligand>
</feature>
<feature type="binding site" evidence="1">
    <location>
        <position position="329"/>
    </location>
    <ligand>
        <name>substrate</name>
    </ligand>
</feature>
<accession>Q8ZMF8</accession>
<comment type="function">
    <text evidence="1">Responsible for synthesis of pseudouridine from uracil-13 in transfer RNAs.</text>
</comment>
<comment type="catalytic activity">
    <reaction evidence="1">
        <text>uridine(13) in tRNA = pseudouridine(13) in tRNA</text>
        <dbReference type="Rhea" id="RHEA:42540"/>
        <dbReference type="Rhea" id="RHEA-COMP:10105"/>
        <dbReference type="Rhea" id="RHEA-COMP:10106"/>
        <dbReference type="ChEBI" id="CHEBI:65314"/>
        <dbReference type="ChEBI" id="CHEBI:65315"/>
        <dbReference type="EC" id="5.4.99.27"/>
    </reaction>
</comment>
<comment type="similarity">
    <text evidence="1">Belongs to the pseudouridine synthase TruD family.</text>
</comment>
<dbReference type="EC" id="5.4.99.27" evidence="1"/>
<dbReference type="EMBL" id="AE006468">
    <property type="protein sequence ID" value="AAL21808.1"/>
    <property type="molecule type" value="Genomic_DNA"/>
</dbReference>
<dbReference type="RefSeq" id="WP_000134246.1">
    <property type="nucleotide sequence ID" value="NC_003197.2"/>
</dbReference>
<dbReference type="SMR" id="Q8ZMF8"/>
<dbReference type="STRING" id="99287.STM2928"/>
<dbReference type="PaxDb" id="99287-STM2928"/>
<dbReference type="KEGG" id="stm:STM2928"/>
<dbReference type="PATRIC" id="fig|99287.12.peg.3082"/>
<dbReference type="HOGENOM" id="CLU_005281_4_0_6"/>
<dbReference type="OMA" id="LWLWVEK"/>
<dbReference type="PhylomeDB" id="Q8ZMF8"/>
<dbReference type="BioCyc" id="SENT99287:STM2928-MONOMER"/>
<dbReference type="Proteomes" id="UP000001014">
    <property type="component" value="Chromosome"/>
</dbReference>
<dbReference type="GO" id="GO:0005829">
    <property type="term" value="C:cytosol"/>
    <property type="evidence" value="ECO:0000318"/>
    <property type="project" value="GO_Central"/>
</dbReference>
<dbReference type="GO" id="GO:0009982">
    <property type="term" value="F:pseudouridine synthase activity"/>
    <property type="evidence" value="ECO:0000318"/>
    <property type="project" value="GO_Central"/>
</dbReference>
<dbReference type="GO" id="GO:0003723">
    <property type="term" value="F:RNA binding"/>
    <property type="evidence" value="ECO:0007669"/>
    <property type="project" value="InterPro"/>
</dbReference>
<dbReference type="GO" id="GO:0160150">
    <property type="term" value="F:tRNA pseudouridine(13) synthase activity"/>
    <property type="evidence" value="ECO:0007669"/>
    <property type="project" value="UniProtKB-EC"/>
</dbReference>
<dbReference type="GO" id="GO:0001522">
    <property type="term" value="P:pseudouridine synthesis"/>
    <property type="evidence" value="ECO:0000318"/>
    <property type="project" value="GO_Central"/>
</dbReference>
<dbReference type="GO" id="GO:0031119">
    <property type="term" value="P:tRNA pseudouridine synthesis"/>
    <property type="evidence" value="ECO:0007669"/>
    <property type="project" value="UniProtKB-UniRule"/>
</dbReference>
<dbReference type="CDD" id="cd02575">
    <property type="entry name" value="PseudoU_synth_EcTruD"/>
    <property type="match status" value="1"/>
</dbReference>
<dbReference type="FunFam" id="3.30.2340.10:FF:000001">
    <property type="entry name" value="tRNA pseudouridine synthase D"/>
    <property type="match status" value="1"/>
</dbReference>
<dbReference type="FunFam" id="3.30.2350.20:FF:000001">
    <property type="entry name" value="tRNA pseudouridine synthase D"/>
    <property type="match status" value="1"/>
</dbReference>
<dbReference type="Gene3D" id="3.30.2350.20">
    <property type="entry name" value="TruD, catalytic domain"/>
    <property type="match status" value="1"/>
</dbReference>
<dbReference type="Gene3D" id="3.30.2340.10">
    <property type="entry name" value="TruD, insertion domain"/>
    <property type="match status" value="1"/>
</dbReference>
<dbReference type="HAMAP" id="MF_01082">
    <property type="entry name" value="TruD"/>
    <property type="match status" value="1"/>
</dbReference>
<dbReference type="InterPro" id="IPR020103">
    <property type="entry name" value="PsdUridine_synth_cat_dom_sf"/>
</dbReference>
<dbReference type="InterPro" id="IPR001656">
    <property type="entry name" value="PsdUridine_synth_TruD"/>
</dbReference>
<dbReference type="InterPro" id="IPR020119">
    <property type="entry name" value="PsdUridine_synth_TruD_CS"/>
</dbReference>
<dbReference type="InterPro" id="IPR011760">
    <property type="entry name" value="PsdUridine_synth_TruD_insert"/>
</dbReference>
<dbReference type="InterPro" id="IPR042214">
    <property type="entry name" value="TruD_catalytic"/>
</dbReference>
<dbReference type="InterPro" id="IPR043165">
    <property type="entry name" value="TruD_insert_sf"/>
</dbReference>
<dbReference type="InterPro" id="IPR050170">
    <property type="entry name" value="TruD_pseudoU_synthase"/>
</dbReference>
<dbReference type="NCBIfam" id="NF002155">
    <property type="entry name" value="PRK00984.1-4"/>
    <property type="match status" value="1"/>
</dbReference>
<dbReference type="NCBIfam" id="TIGR00094">
    <property type="entry name" value="tRNA_TruD_broad"/>
    <property type="match status" value="1"/>
</dbReference>
<dbReference type="PANTHER" id="PTHR47811">
    <property type="entry name" value="TRNA PSEUDOURIDINE SYNTHASE D"/>
    <property type="match status" value="1"/>
</dbReference>
<dbReference type="PANTHER" id="PTHR47811:SF1">
    <property type="entry name" value="TRNA PSEUDOURIDINE SYNTHASE D"/>
    <property type="match status" value="1"/>
</dbReference>
<dbReference type="Pfam" id="PF01142">
    <property type="entry name" value="TruD"/>
    <property type="match status" value="2"/>
</dbReference>
<dbReference type="SUPFAM" id="SSF55120">
    <property type="entry name" value="Pseudouridine synthase"/>
    <property type="match status" value="1"/>
</dbReference>
<dbReference type="PROSITE" id="PS50984">
    <property type="entry name" value="TRUD"/>
    <property type="match status" value="1"/>
</dbReference>
<dbReference type="PROSITE" id="PS01268">
    <property type="entry name" value="UPF0024"/>
    <property type="match status" value="1"/>
</dbReference>
<evidence type="ECO:0000255" key="1">
    <source>
        <dbReference type="HAMAP-Rule" id="MF_01082"/>
    </source>
</evidence>
<protein>
    <recommendedName>
        <fullName evidence="1">tRNA pseudouridine synthase D</fullName>
        <ecNumber evidence="1">5.4.99.27</ecNumber>
    </recommendedName>
    <alternativeName>
        <fullName evidence="1">tRNA pseudouridine(13) synthase</fullName>
    </alternativeName>
    <alternativeName>
        <fullName evidence="1">tRNA pseudouridylate synthase D</fullName>
    </alternativeName>
    <alternativeName>
        <fullName evidence="1">tRNA-uridine isomerase D</fullName>
    </alternativeName>
</protein>
<organism>
    <name type="scientific">Salmonella typhimurium (strain LT2 / SGSC1412 / ATCC 700720)</name>
    <dbReference type="NCBI Taxonomy" id="99287"/>
    <lineage>
        <taxon>Bacteria</taxon>
        <taxon>Pseudomonadati</taxon>
        <taxon>Pseudomonadota</taxon>
        <taxon>Gammaproteobacteria</taxon>
        <taxon>Enterobacterales</taxon>
        <taxon>Enterobacteriaceae</taxon>
        <taxon>Salmonella</taxon>
    </lineage>
</organism>
<gene>
    <name evidence="1" type="primary">truD</name>
    <name type="ordered locus">STM2928</name>
</gene>
<keyword id="KW-0413">Isomerase</keyword>
<keyword id="KW-1185">Reference proteome</keyword>
<keyword id="KW-0819">tRNA processing</keyword>